<name>PLCD1_ARATH</name>
<comment type="function">
    <text evidence="6 7 8">The production of the second messenger molecules diacylglycerol (DAG) and inositol 1,4,5-trisphosphate (IP3) is mediated by activated phosphatidylinositol-specific phospholipase C enzymes. Required for secondary responses to abscisic acid signals.</text>
</comment>
<comment type="catalytic activity">
    <reaction>
        <text>a 1,2-diacyl-sn-glycero-3-phospho-(1D-myo-inositol-4,5-bisphosphate) + H2O = 1D-myo-inositol 1,4,5-trisphosphate + a 1,2-diacyl-sn-glycerol + H(+)</text>
        <dbReference type="Rhea" id="RHEA:33179"/>
        <dbReference type="ChEBI" id="CHEBI:15377"/>
        <dbReference type="ChEBI" id="CHEBI:15378"/>
        <dbReference type="ChEBI" id="CHEBI:17815"/>
        <dbReference type="ChEBI" id="CHEBI:58456"/>
        <dbReference type="ChEBI" id="CHEBI:203600"/>
        <dbReference type="EC" id="3.1.4.11"/>
    </reaction>
</comment>
<comment type="cofactor">
    <cofactor evidence="2">
        <name>Ca(2+)</name>
        <dbReference type="ChEBI" id="CHEBI:29108"/>
    </cofactor>
</comment>
<comment type="subcellular location">
    <subcellularLocation>
        <location evidence="1">Cell membrane</location>
        <topology evidence="1">Peripheral membrane protein</topology>
    </subcellularLocation>
</comment>
<comment type="tissue specificity">
    <text evidence="7 8">Expressed in stems, leaves, roots, flowers and siliques. Predominant in the vascular tissues of roots and leaves.</text>
</comment>
<comment type="induction">
    <text evidence="7 8">By abscisic acid, osmotic stress and environmental stresses such as dehydration, salinity and low temperature.</text>
</comment>
<sequence>MKESFKVCFCCVRNFKVKSSEPPEEIKNLFHDYSQDDRMSADEMLRFVIQVQGETHADINYVKDIFHRLKHHGVFHPRGIHLEGFYRYLLSDFNSPLPLTREVWQDMNQPLSHYFLYTGHNSYLTGNQLNSNSSIEPIVKALRNGVRVIELDLWPNSSGKEAEVRHGGTLTSREDLQKCLNVVKENAFQVSAYPVVLTLEDHLTPILQKKVAKMVSKTFGGSLFQCTDETTECFPSPESLKNKILISTKPPKEYLQTQISKGSTTDESTRAKKISDAEEQVQEEDEESVAIEYRDLISIHAGNRKGGLKNCLNGDPNRVIRLSMSEQWLETLAKTRGPDLVKFTQRNLLRIFPKTTRFDSSNYDPLVGWIHGAQMVAFNMQSHGRYLWMMQGMFKANGGCGYVKKPDVLLSNGPEGEIFDPCSQNLPIKTTLKVKIYTGEGWNMDFPLDHFDRYSPPDFYAKVGIAGVPLDTASYRTEIDKDEWFPIWDKEFEFPLRVPELSLLCITVKDYDSNTQNDFAGQTCFPLSEVRPGIRAVRLHDRAGEVYKHVRLLMRFVLEPR</sequence>
<keyword id="KW-0106">Calcium</keyword>
<keyword id="KW-1003">Cell membrane</keyword>
<keyword id="KW-0378">Hydrolase</keyword>
<keyword id="KW-0442">Lipid degradation</keyword>
<keyword id="KW-0443">Lipid metabolism</keyword>
<keyword id="KW-0472">Membrane</keyword>
<keyword id="KW-0479">Metal-binding</keyword>
<keyword id="KW-1185">Reference proteome</keyword>
<keyword id="KW-0807">Transducer</keyword>
<protein>
    <recommendedName>
        <fullName>Phosphoinositide phospholipase C 1</fullName>
        <ecNumber>3.1.4.11</ecNumber>
    </recommendedName>
    <alternativeName>
        <fullName>Phosphoinositide phospholipase PLC1</fullName>
        <shortName>AtPLC1</shortName>
        <shortName>AtPLC1S</shortName>
        <shortName>PI-PLC1</shortName>
    </alternativeName>
</protein>
<reference key="1">
    <citation type="journal article" date="1995" name="Proc. Natl. Acad. Sci. U.S.A.">
        <title>A gene encoding a phosphatidylinositol-specific phospholipase C is induced by dehydration and salt stress in Arabidopsis thaliana.</title>
        <authorList>
            <person name="Hirayama T."/>
            <person name="Ohto C."/>
            <person name="Mizoguchi T."/>
            <person name="Shinozaki K."/>
        </authorList>
    </citation>
    <scope>NUCLEOTIDE SEQUENCE [MRNA]</scope>
    <scope>FUNCTION</scope>
    <scope>TISSUE SPECIFICITY</scope>
    <scope>INDUCTION</scope>
    <source>
        <strain>cv. Columbia</strain>
    </source>
</reference>
<reference key="2">
    <citation type="journal article" date="1997" name="Gene">
        <title>The Arabidopsis thaliana genome has multiple divergent forms of phosphoinositol-specific phospholipase C1.</title>
        <authorList>
            <person name="Hartweck L.M."/>
            <person name="Llewellyn D.J."/>
            <person name="Dennis E.S."/>
        </authorList>
    </citation>
    <scope>NUCLEOTIDE SEQUENCE [MRNA]</scope>
    <source>
        <strain>cv. C24</strain>
    </source>
</reference>
<reference key="3">
    <citation type="journal article" date="2000" name="DNA Res.">
        <title>Structural analysis of Arabidopsis thaliana chromosome 5. X. Sequence features of the regions of 3,076,755 bp covered by sixty P1 and TAC clones.</title>
        <authorList>
            <person name="Sato S."/>
            <person name="Nakamura Y."/>
            <person name="Kaneko T."/>
            <person name="Katoh T."/>
            <person name="Asamizu E."/>
            <person name="Kotani H."/>
            <person name="Tabata S."/>
        </authorList>
    </citation>
    <scope>NUCLEOTIDE SEQUENCE [LARGE SCALE GENOMIC DNA]</scope>
    <source>
        <strain>cv. Columbia</strain>
    </source>
</reference>
<reference key="4">
    <citation type="journal article" date="2017" name="Plant J.">
        <title>Araport11: a complete reannotation of the Arabidopsis thaliana reference genome.</title>
        <authorList>
            <person name="Cheng C.Y."/>
            <person name="Krishnakumar V."/>
            <person name="Chan A.P."/>
            <person name="Thibaud-Nissen F."/>
            <person name="Schobel S."/>
            <person name="Town C.D."/>
        </authorList>
    </citation>
    <scope>GENOME REANNOTATION</scope>
    <source>
        <strain>cv. Columbia</strain>
    </source>
</reference>
<reference key="5">
    <citation type="journal article" date="2001" name="Plant Cell">
        <title>Arabidopsis PLC1 is required for secondary responses to abscisic acid signals.</title>
        <authorList>
            <person name="Sanchez J.-P."/>
            <person name="Chua N.-H."/>
        </authorList>
    </citation>
    <scope>FUNCTION</scope>
</reference>
<reference key="6">
    <citation type="journal article" date="2002" name="Plant Physiol.">
        <title>Inositol phospholipid metabolism in Arabidopsis. Characterized and putative isoforms of inositol phospholipid kinase and phosphoinositide-specific phospholipase C.</title>
        <authorList>
            <person name="Mueller-Roeber B."/>
            <person name="Pical C."/>
        </authorList>
    </citation>
    <scope>GENE FAMILY</scope>
    <scope>NOMENCLATURE</scope>
</reference>
<reference key="7">
    <citation type="journal article" date="2004" name="New Phytol.">
        <title>Gene-specific expression and calcium activation of Arabidopsis thaliana phospholipase C isoforms.</title>
        <authorList>
            <person name="Hunt L."/>
            <person name="Otterhag L."/>
            <person name="Lee J.C."/>
            <person name="Lasheen T."/>
            <person name="Hunt J."/>
            <person name="Seki M."/>
            <person name="Shinozaki K."/>
            <person name="Sommarin M."/>
            <person name="Gilmour D.J."/>
            <person name="Pical C."/>
            <person name="Gray J.E."/>
        </authorList>
        <dbReference type="AGRICOLA" id="IND43668249"/>
    </citation>
    <scope>FUNCTION</scope>
    <scope>INDUCTION</scope>
    <scope>TISSUE SPECIFICITY</scope>
</reference>
<dbReference type="EC" id="3.1.4.11"/>
<dbReference type="EMBL" id="D38544">
    <property type="protein sequence ID" value="BAA07547.1"/>
    <property type="molecule type" value="mRNA"/>
</dbReference>
<dbReference type="EMBL" id="U76423">
    <property type="protein sequence ID" value="AAC05023.1"/>
    <property type="molecule type" value="Genomic_DNA"/>
</dbReference>
<dbReference type="EMBL" id="AB020755">
    <property type="protein sequence ID" value="BAA97336.1"/>
    <property type="molecule type" value="Genomic_DNA"/>
</dbReference>
<dbReference type="EMBL" id="CP002688">
    <property type="protein sequence ID" value="AED97083.1"/>
    <property type="molecule type" value="Genomic_DNA"/>
</dbReference>
<dbReference type="RefSeq" id="NP_568881.1">
    <property type="nucleotide sequence ID" value="NM_125254.2"/>
</dbReference>
<dbReference type="SMR" id="Q39032"/>
<dbReference type="BioGRID" id="21225">
    <property type="interactions" value="1"/>
</dbReference>
<dbReference type="FunCoup" id="Q39032">
    <property type="interactions" value="788"/>
</dbReference>
<dbReference type="STRING" id="3702.Q39032"/>
<dbReference type="iPTMnet" id="Q39032"/>
<dbReference type="SwissPalm" id="Q39032"/>
<dbReference type="PaxDb" id="3702-AT5G58670.1"/>
<dbReference type="ProteomicsDB" id="236631"/>
<dbReference type="EnsemblPlants" id="AT5G58670.1">
    <property type="protein sequence ID" value="AT5G58670.1"/>
    <property type="gene ID" value="AT5G58670"/>
</dbReference>
<dbReference type="GeneID" id="835981"/>
<dbReference type="Gramene" id="AT5G58670.1">
    <property type="protein sequence ID" value="AT5G58670.1"/>
    <property type="gene ID" value="AT5G58670"/>
</dbReference>
<dbReference type="KEGG" id="ath:AT5G58670"/>
<dbReference type="Araport" id="AT5G58670"/>
<dbReference type="TAIR" id="AT5G58670">
    <property type="gene designation" value="PLC1"/>
</dbReference>
<dbReference type="eggNOG" id="KOG0169">
    <property type="taxonomic scope" value="Eukaryota"/>
</dbReference>
<dbReference type="HOGENOM" id="CLU_002738_3_2_1"/>
<dbReference type="InParanoid" id="Q39032"/>
<dbReference type="OMA" id="LFQCTDE"/>
<dbReference type="PhylomeDB" id="Q39032"/>
<dbReference type="BioCyc" id="ARA:AT5G58670-MONOMER"/>
<dbReference type="BioCyc" id="MetaCyc:MONOMER-1622"/>
<dbReference type="BRENDA" id="3.1.4.11">
    <property type="organism ID" value="399"/>
</dbReference>
<dbReference type="PRO" id="PR:Q39032"/>
<dbReference type="Proteomes" id="UP000006548">
    <property type="component" value="Chromosome 5"/>
</dbReference>
<dbReference type="ExpressionAtlas" id="Q39032">
    <property type="expression patterns" value="baseline and differential"/>
</dbReference>
<dbReference type="GO" id="GO:0005886">
    <property type="term" value="C:plasma membrane"/>
    <property type="evidence" value="ECO:0007669"/>
    <property type="project" value="UniProtKB-SubCell"/>
</dbReference>
<dbReference type="GO" id="GO:0046872">
    <property type="term" value="F:metal ion binding"/>
    <property type="evidence" value="ECO:0007669"/>
    <property type="project" value="UniProtKB-KW"/>
</dbReference>
<dbReference type="GO" id="GO:0004435">
    <property type="term" value="F:phosphatidylinositol-4,5-bisphosphate phospholipase C activity"/>
    <property type="evidence" value="ECO:0007669"/>
    <property type="project" value="UniProtKB-EC"/>
</dbReference>
<dbReference type="GO" id="GO:0004629">
    <property type="term" value="F:phospholipase C activity"/>
    <property type="evidence" value="ECO:0000314"/>
    <property type="project" value="TAIR"/>
</dbReference>
<dbReference type="GO" id="GO:0009738">
    <property type="term" value="P:abscisic acid-activated signaling pathway"/>
    <property type="evidence" value="ECO:0000304"/>
    <property type="project" value="TAIR"/>
</dbReference>
<dbReference type="GO" id="GO:0035556">
    <property type="term" value="P:intracellular signal transduction"/>
    <property type="evidence" value="ECO:0007669"/>
    <property type="project" value="InterPro"/>
</dbReference>
<dbReference type="GO" id="GO:0016042">
    <property type="term" value="P:lipid catabolic process"/>
    <property type="evidence" value="ECO:0007669"/>
    <property type="project" value="UniProtKB-KW"/>
</dbReference>
<dbReference type="GO" id="GO:0009737">
    <property type="term" value="P:response to abscisic acid"/>
    <property type="evidence" value="ECO:0000315"/>
    <property type="project" value="TAIR"/>
</dbReference>
<dbReference type="GO" id="GO:0009409">
    <property type="term" value="P:response to cold"/>
    <property type="evidence" value="ECO:0000270"/>
    <property type="project" value="TAIR"/>
</dbReference>
<dbReference type="GO" id="GO:0009651">
    <property type="term" value="P:response to salt stress"/>
    <property type="evidence" value="ECO:0000270"/>
    <property type="project" value="TAIR"/>
</dbReference>
<dbReference type="GO" id="GO:0009414">
    <property type="term" value="P:response to water deprivation"/>
    <property type="evidence" value="ECO:0000270"/>
    <property type="project" value="TAIR"/>
</dbReference>
<dbReference type="CDD" id="cd00275">
    <property type="entry name" value="C2_PLC_like"/>
    <property type="match status" value="1"/>
</dbReference>
<dbReference type="FunFam" id="1.10.238.10:FF:000254">
    <property type="entry name" value="Phosphoinositide phospholipase C"/>
    <property type="match status" value="1"/>
</dbReference>
<dbReference type="FunFam" id="2.60.40.150:FF:000060">
    <property type="entry name" value="Phosphoinositide phospholipase C"/>
    <property type="match status" value="1"/>
</dbReference>
<dbReference type="FunFam" id="3.20.20.190:FF:000035">
    <property type="entry name" value="Phosphoinositide phospholipase C"/>
    <property type="match status" value="1"/>
</dbReference>
<dbReference type="Gene3D" id="2.60.40.150">
    <property type="entry name" value="C2 domain"/>
    <property type="match status" value="1"/>
</dbReference>
<dbReference type="Gene3D" id="1.10.238.10">
    <property type="entry name" value="EF-hand"/>
    <property type="match status" value="1"/>
</dbReference>
<dbReference type="Gene3D" id="3.20.20.190">
    <property type="entry name" value="Phosphatidylinositol (PI) phosphodiesterase"/>
    <property type="match status" value="1"/>
</dbReference>
<dbReference type="InterPro" id="IPR000008">
    <property type="entry name" value="C2_dom"/>
</dbReference>
<dbReference type="InterPro" id="IPR035892">
    <property type="entry name" value="C2_domain_sf"/>
</dbReference>
<dbReference type="InterPro" id="IPR011992">
    <property type="entry name" value="EF-hand-dom_pair"/>
</dbReference>
<dbReference type="InterPro" id="IPR018247">
    <property type="entry name" value="EF_Hand_1_Ca_BS"/>
</dbReference>
<dbReference type="InterPro" id="IPR001192">
    <property type="entry name" value="PI-PLC_fam"/>
</dbReference>
<dbReference type="InterPro" id="IPR017946">
    <property type="entry name" value="PLC-like_Pdiesterase_TIM-brl"/>
</dbReference>
<dbReference type="InterPro" id="IPR015359">
    <property type="entry name" value="PLC_EF-hand-like"/>
</dbReference>
<dbReference type="InterPro" id="IPR000909">
    <property type="entry name" value="PLipase_C_PInositol-sp_X_dom"/>
</dbReference>
<dbReference type="InterPro" id="IPR001711">
    <property type="entry name" value="PLipase_C_Pinositol-sp_Y"/>
</dbReference>
<dbReference type="PANTHER" id="PTHR10336:SF105">
    <property type="entry name" value="PHOSPHOINOSITIDE PHOSPHOLIPASE C 1"/>
    <property type="match status" value="1"/>
</dbReference>
<dbReference type="PANTHER" id="PTHR10336">
    <property type="entry name" value="PHOSPHOINOSITIDE-SPECIFIC PHOSPHOLIPASE C FAMILY PROTEIN"/>
    <property type="match status" value="1"/>
</dbReference>
<dbReference type="Pfam" id="PF00168">
    <property type="entry name" value="C2"/>
    <property type="match status" value="1"/>
</dbReference>
<dbReference type="Pfam" id="PF09279">
    <property type="entry name" value="EF-hand_like"/>
    <property type="match status" value="1"/>
</dbReference>
<dbReference type="Pfam" id="PF00388">
    <property type="entry name" value="PI-PLC-X"/>
    <property type="match status" value="1"/>
</dbReference>
<dbReference type="Pfam" id="PF00387">
    <property type="entry name" value="PI-PLC-Y"/>
    <property type="match status" value="1"/>
</dbReference>
<dbReference type="PRINTS" id="PR00390">
    <property type="entry name" value="PHPHLIPASEC"/>
</dbReference>
<dbReference type="SMART" id="SM00239">
    <property type="entry name" value="C2"/>
    <property type="match status" value="1"/>
</dbReference>
<dbReference type="SMART" id="SM00148">
    <property type="entry name" value="PLCXc"/>
    <property type="match status" value="1"/>
</dbReference>
<dbReference type="SMART" id="SM00149">
    <property type="entry name" value="PLCYc"/>
    <property type="match status" value="1"/>
</dbReference>
<dbReference type="SUPFAM" id="SSF49562">
    <property type="entry name" value="C2 domain (Calcium/lipid-binding domain, CaLB)"/>
    <property type="match status" value="1"/>
</dbReference>
<dbReference type="SUPFAM" id="SSF47473">
    <property type="entry name" value="EF-hand"/>
    <property type="match status" value="1"/>
</dbReference>
<dbReference type="SUPFAM" id="SSF51695">
    <property type="entry name" value="PLC-like phosphodiesterases"/>
    <property type="match status" value="1"/>
</dbReference>
<dbReference type="PROSITE" id="PS50004">
    <property type="entry name" value="C2"/>
    <property type="match status" value="1"/>
</dbReference>
<dbReference type="PROSITE" id="PS00018">
    <property type="entry name" value="EF_HAND_1"/>
    <property type="match status" value="1"/>
</dbReference>
<dbReference type="PROSITE" id="PS50007">
    <property type="entry name" value="PIPLC_X_DOMAIN"/>
    <property type="match status" value="1"/>
</dbReference>
<dbReference type="PROSITE" id="PS50008">
    <property type="entry name" value="PIPLC_Y_DOMAIN"/>
    <property type="match status" value="1"/>
</dbReference>
<accession>Q39032</accession>
<accession>O49970</accession>
<evidence type="ECO:0000250" key="1"/>
<evidence type="ECO:0000255" key="2">
    <source>
        <dbReference type="PROSITE-ProRule" id="PRU00041"/>
    </source>
</evidence>
<evidence type="ECO:0000255" key="3">
    <source>
        <dbReference type="PROSITE-ProRule" id="PRU00270"/>
    </source>
</evidence>
<evidence type="ECO:0000255" key="4">
    <source>
        <dbReference type="PROSITE-ProRule" id="PRU00271"/>
    </source>
</evidence>
<evidence type="ECO:0000256" key="5">
    <source>
        <dbReference type="SAM" id="MobiDB-lite"/>
    </source>
</evidence>
<evidence type="ECO:0000269" key="6">
    <source>
    </source>
</evidence>
<evidence type="ECO:0000269" key="7">
    <source>
    </source>
</evidence>
<evidence type="ECO:0000269" key="8">
    <source ref="7"/>
</evidence>
<evidence type="ECO:0000305" key="9"/>
<organism>
    <name type="scientific">Arabidopsis thaliana</name>
    <name type="common">Mouse-ear cress</name>
    <dbReference type="NCBI Taxonomy" id="3702"/>
    <lineage>
        <taxon>Eukaryota</taxon>
        <taxon>Viridiplantae</taxon>
        <taxon>Streptophyta</taxon>
        <taxon>Embryophyta</taxon>
        <taxon>Tracheophyta</taxon>
        <taxon>Spermatophyta</taxon>
        <taxon>Magnoliopsida</taxon>
        <taxon>eudicotyledons</taxon>
        <taxon>Gunneridae</taxon>
        <taxon>Pentapetalae</taxon>
        <taxon>rosids</taxon>
        <taxon>malvids</taxon>
        <taxon>Brassicales</taxon>
        <taxon>Brassicaceae</taxon>
        <taxon>Camelineae</taxon>
        <taxon>Arabidopsis</taxon>
    </lineage>
</organism>
<gene>
    <name type="primary">PLC1</name>
    <name type="synonym">ATHATPLC1G</name>
    <name type="ordered locus">At5g58670</name>
    <name type="ORF">MZN1.12</name>
</gene>
<feature type="chain" id="PRO_0000324126" description="Phosphoinositide phospholipase C 1">
    <location>
        <begin position="1"/>
        <end position="561"/>
    </location>
</feature>
<feature type="domain" description="EF-hand">
    <location>
        <begin position="21"/>
        <end position="54"/>
    </location>
</feature>
<feature type="domain" description="PI-PLC X-box" evidence="3">
    <location>
        <begin position="105"/>
        <end position="249"/>
    </location>
</feature>
<feature type="domain" description="PI-PLC Y-box" evidence="4">
    <location>
        <begin position="294"/>
        <end position="410"/>
    </location>
</feature>
<feature type="domain" description="C2" evidence="2">
    <location>
        <begin position="414"/>
        <end position="541"/>
    </location>
</feature>
<feature type="region of interest" description="Disordered" evidence="5">
    <location>
        <begin position="256"/>
        <end position="285"/>
    </location>
</feature>
<feature type="compositionally biased region" description="Polar residues" evidence="5">
    <location>
        <begin position="256"/>
        <end position="266"/>
    </location>
</feature>
<feature type="compositionally biased region" description="Basic and acidic residues" evidence="5">
    <location>
        <begin position="267"/>
        <end position="276"/>
    </location>
</feature>
<feature type="active site" evidence="3">
    <location>
        <position position="120"/>
    </location>
</feature>
<feature type="active site" evidence="3">
    <location>
        <position position="166"/>
    </location>
</feature>
<feature type="binding site" evidence="2">
    <location>
        <position position="452"/>
    </location>
    <ligand>
        <name>Ca(2+)</name>
        <dbReference type="ChEBI" id="CHEBI:29108"/>
        <label>1</label>
    </ligand>
</feature>
<feature type="binding site" evidence="2">
    <location>
        <position position="452"/>
    </location>
    <ligand>
        <name>Ca(2+)</name>
        <dbReference type="ChEBI" id="CHEBI:29108"/>
        <label>2</label>
    </ligand>
</feature>
<feature type="binding site" evidence="2">
    <location>
        <position position="458"/>
    </location>
    <ligand>
        <name>Ca(2+)</name>
        <dbReference type="ChEBI" id="CHEBI:29108"/>
        <label>1</label>
    </ligand>
</feature>
<feature type="binding site" evidence="2">
    <location>
        <position position="510"/>
    </location>
    <ligand>
        <name>Ca(2+)</name>
        <dbReference type="ChEBI" id="CHEBI:29108"/>
        <label>1</label>
    </ligand>
</feature>
<feature type="binding site" evidence="2">
    <location>
        <position position="510"/>
    </location>
    <ligand>
        <name>Ca(2+)</name>
        <dbReference type="ChEBI" id="CHEBI:29108"/>
        <label>2</label>
    </ligand>
</feature>
<feature type="binding site" evidence="2">
    <location>
        <position position="512"/>
    </location>
    <ligand>
        <name>Ca(2+)</name>
        <dbReference type="ChEBI" id="CHEBI:29108"/>
        <label>1</label>
    </ligand>
</feature>
<feature type="binding site" evidence="2">
    <location>
        <position position="512"/>
    </location>
    <ligand>
        <name>Ca(2+)</name>
        <dbReference type="ChEBI" id="CHEBI:29108"/>
        <label>2</label>
    </ligand>
</feature>
<feature type="binding site" evidence="2">
    <location>
        <position position="518"/>
    </location>
    <ligand>
        <name>Ca(2+)</name>
        <dbReference type="ChEBI" id="CHEBI:29108"/>
        <label>2</label>
    </ligand>
</feature>
<feature type="sequence conflict" description="In Ref. 2; AAC05023." evidence="9" ref="2">
    <original>R</original>
    <variation>G</variation>
    <location>
        <position position="87"/>
    </location>
</feature>
<proteinExistence type="evidence at transcript level"/>